<feature type="chain" id="PRO_0000353650" description="NAD(P)H-quinone oxidoreductase subunit O">
    <location>
        <begin position="1"/>
        <end position="72"/>
    </location>
</feature>
<accession>Q8GIT3</accession>
<organism>
    <name type="scientific">Synechococcus elongatus (strain ATCC 33912 / PCC 7942 / FACHB-805)</name>
    <name type="common">Anacystis nidulans R2</name>
    <dbReference type="NCBI Taxonomy" id="1140"/>
    <lineage>
        <taxon>Bacteria</taxon>
        <taxon>Bacillati</taxon>
        <taxon>Cyanobacteriota</taxon>
        <taxon>Cyanophyceae</taxon>
        <taxon>Synechococcales</taxon>
        <taxon>Synechococcaceae</taxon>
        <taxon>Synechococcus</taxon>
    </lineage>
</organism>
<sequence length="72" mass="7826">MAAALKKGSLVRAIAEQLQGSVELLASDGRIPSYVLETNGEILDIKGDYALVRFSRPTPNVWLRLDQLQSAA</sequence>
<gene>
    <name evidence="1" type="primary">ndhO</name>
    <name type="ordered locus">Synpcc7942_2487</name>
</gene>
<keyword id="KW-0472">Membrane</keyword>
<keyword id="KW-0520">NAD</keyword>
<keyword id="KW-0521">NADP</keyword>
<keyword id="KW-0618">Plastoquinone</keyword>
<keyword id="KW-0874">Quinone</keyword>
<keyword id="KW-1185">Reference proteome</keyword>
<keyword id="KW-0793">Thylakoid</keyword>
<keyword id="KW-1278">Translocase</keyword>
<keyword id="KW-0813">Transport</keyword>
<proteinExistence type="inferred from homology"/>
<protein>
    <recommendedName>
        <fullName evidence="1">NAD(P)H-quinone oxidoreductase subunit O</fullName>
        <ecNumber evidence="1">7.1.1.-</ecNumber>
    </recommendedName>
    <alternativeName>
        <fullName evidence="1">NAD(P)H dehydrogenase I subunit O</fullName>
    </alternativeName>
    <alternativeName>
        <fullName>NDH-1 subunit O</fullName>
    </alternativeName>
    <alternativeName>
        <fullName>NDH-O</fullName>
    </alternativeName>
</protein>
<name>NDHO_SYNE7</name>
<comment type="function">
    <text evidence="1">NDH-1 shuttles electrons from an unknown electron donor, via FMN and iron-sulfur (Fe-S) centers, to quinones in the respiratory and/or the photosynthetic chain. The immediate electron acceptor for the enzyme in this species is believed to be plastoquinone. Couples the redox reaction to proton translocation, and thus conserves the redox energy in a proton gradient. Cyanobacterial NDH-1 also plays a role in inorganic carbon-concentration.</text>
</comment>
<comment type="catalytic activity">
    <reaction evidence="1">
        <text>a plastoquinone + NADH + (n+1) H(+)(in) = a plastoquinol + NAD(+) + n H(+)(out)</text>
        <dbReference type="Rhea" id="RHEA:42608"/>
        <dbReference type="Rhea" id="RHEA-COMP:9561"/>
        <dbReference type="Rhea" id="RHEA-COMP:9562"/>
        <dbReference type="ChEBI" id="CHEBI:15378"/>
        <dbReference type="ChEBI" id="CHEBI:17757"/>
        <dbReference type="ChEBI" id="CHEBI:57540"/>
        <dbReference type="ChEBI" id="CHEBI:57945"/>
        <dbReference type="ChEBI" id="CHEBI:62192"/>
    </reaction>
</comment>
<comment type="catalytic activity">
    <reaction evidence="1">
        <text>a plastoquinone + NADPH + (n+1) H(+)(in) = a plastoquinol + NADP(+) + n H(+)(out)</text>
        <dbReference type="Rhea" id="RHEA:42612"/>
        <dbReference type="Rhea" id="RHEA-COMP:9561"/>
        <dbReference type="Rhea" id="RHEA-COMP:9562"/>
        <dbReference type="ChEBI" id="CHEBI:15378"/>
        <dbReference type="ChEBI" id="CHEBI:17757"/>
        <dbReference type="ChEBI" id="CHEBI:57783"/>
        <dbReference type="ChEBI" id="CHEBI:58349"/>
        <dbReference type="ChEBI" id="CHEBI:62192"/>
    </reaction>
</comment>
<comment type="subunit">
    <text evidence="1">NDH-1 can be composed of about 15 different subunits; different subcomplexes with different compositions have been identified which probably have different functions.</text>
</comment>
<comment type="subcellular location">
    <subcellularLocation>
        <location evidence="1">Cellular thylakoid membrane</location>
        <topology evidence="1">Peripheral membrane protein</topology>
        <orientation evidence="1">Cytoplasmic side</orientation>
    </subcellularLocation>
</comment>
<comment type="similarity">
    <text evidence="1">Belongs to the complex I NdhO subunit family.</text>
</comment>
<evidence type="ECO:0000255" key="1">
    <source>
        <dbReference type="HAMAP-Rule" id="MF_01354"/>
    </source>
</evidence>
<dbReference type="EC" id="7.1.1.-" evidence="1"/>
<dbReference type="EMBL" id="U30252">
    <property type="protein sequence ID" value="AAN71777.1"/>
    <property type="molecule type" value="Genomic_DNA"/>
</dbReference>
<dbReference type="EMBL" id="CP000100">
    <property type="protein sequence ID" value="ABB58517.1"/>
    <property type="molecule type" value="Genomic_DNA"/>
</dbReference>
<dbReference type="RefSeq" id="WP_011243929.1">
    <property type="nucleotide sequence ID" value="NZ_JACJTX010000001.1"/>
</dbReference>
<dbReference type="SMR" id="Q8GIT3"/>
<dbReference type="STRING" id="1140.Synpcc7942_2487"/>
<dbReference type="PaxDb" id="1140-Synpcc7942_2487"/>
<dbReference type="KEGG" id="syf:Synpcc7942_2487"/>
<dbReference type="eggNOG" id="ENOG5032XZT">
    <property type="taxonomic scope" value="Bacteria"/>
</dbReference>
<dbReference type="HOGENOM" id="CLU_195299_0_0_3"/>
<dbReference type="OrthoDB" id="426633at2"/>
<dbReference type="BioCyc" id="MetaCyc:SYNPCC7942_2487-MONOMER"/>
<dbReference type="BioCyc" id="SYNEL:SYNPCC7942_2487-MONOMER"/>
<dbReference type="Proteomes" id="UP000889800">
    <property type="component" value="Chromosome"/>
</dbReference>
<dbReference type="GO" id="GO:0031676">
    <property type="term" value="C:plasma membrane-derived thylakoid membrane"/>
    <property type="evidence" value="ECO:0007669"/>
    <property type="project" value="UniProtKB-SubCell"/>
</dbReference>
<dbReference type="GO" id="GO:0016655">
    <property type="term" value="F:oxidoreductase activity, acting on NAD(P)H, quinone or similar compound as acceptor"/>
    <property type="evidence" value="ECO:0007669"/>
    <property type="project" value="UniProtKB-UniRule"/>
</dbReference>
<dbReference type="GO" id="GO:0048038">
    <property type="term" value="F:quinone binding"/>
    <property type="evidence" value="ECO:0007669"/>
    <property type="project" value="UniProtKB-KW"/>
</dbReference>
<dbReference type="HAMAP" id="MF_01354">
    <property type="entry name" value="NDH1_NDH1O"/>
    <property type="match status" value="1"/>
</dbReference>
<dbReference type="InterPro" id="IPR020905">
    <property type="entry name" value="NdhO"/>
</dbReference>
<dbReference type="Pfam" id="PF11910">
    <property type="entry name" value="NdhO"/>
    <property type="match status" value="1"/>
</dbReference>
<reference key="1">
    <citation type="submission" date="2002-11" db="EMBL/GenBank/DDBJ databases">
        <title>Synechococcus elongatus PCC7942 genome sequence, cosmid 7H1 and 2E8.</title>
        <authorList>
            <person name="Holtman C.K."/>
            <person name="Socias T."/>
            <person name="Mohler B.J."/>
            <person name="Chen Y."/>
            <person name="Min H."/>
            <person name="Golden S.S."/>
            <person name="Youderian P."/>
            <person name="Sandoval P."/>
            <person name="Gonzalez A."/>
            <person name="Salinas I."/>
        </authorList>
    </citation>
    <scope>NUCLEOTIDE SEQUENCE [GENOMIC DNA]</scope>
</reference>
<reference key="2">
    <citation type="submission" date="2005-08" db="EMBL/GenBank/DDBJ databases">
        <title>Complete sequence of chromosome 1 of Synechococcus elongatus PCC 7942.</title>
        <authorList>
            <consortium name="US DOE Joint Genome Institute"/>
            <person name="Copeland A."/>
            <person name="Lucas S."/>
            <person name="Lapidus A."/>
            <person name="Barry K."/>
            <person name="Detter J.C."/>
            <person name="Glavina T."/>
            <person name="Hammon N."/>
            <person name="Israni S."/>
            <person name="Pitluck S."/>
            <person name="Schmutz J."/>
            <person name="Larimer F."/>
            <person name="Land M."/>
            <person name="Kyrpides N."/>
            <person name="Lykidis A."/>
            <person name="Golden S."/>
            <person name="Richardson P."/>
        </authorList>
    </citation>
    <scope>NUCLEOTIDE SEQUENCE [LARGE SCALE GENOMIC DNA]</scope>
    <source>
        <strain>ATCC 33912 / PCC 7942 / FACHB-805</strain>
    </source>
</reference>